<feature type="chain" id="PRO_0000095656" description="RNA-binding protein Hfq">
    <location>
        <begin position="1"/>
        <end position="82"/>
    </location>
</feature>
<feature type="domain" description="Sm" evidence="2">
    <location>
        <begin position="9"/>
        <end position="68"/>
    </location>
</feature>
<feature type="turn" evidence="4">
    <location>
        <begin position="4"/>
        <end position="7"/>
    </location>
</feature>
<feature type="helix" evidence="3">
    <location>
        <begin position="8"/>
        <end position="17"/>
    </location>
</feature>
<feature type="strand" evidence="3">
    <location>
        <begin position="22"/>
        <end position="26"/>
    </location>
</feature>
<feature type="strand" evidence="3">
    <location>
        <begin position="31"/>
        <end position="39"/>
    </location>
</feature>
<feature type="strand" evidence="3">
    <location>
        <begin position="41"/>
        <end position="50"/>
    </location>
</feature>
<feature type="strand" evidence="3">
    <location>
        <begin position="52"/>
        <end position="55"/>
    </location>
</feature>
<feature type="helix" evidence="3">
    <location>
        <begin position="56"/>
        <end position="58"/>
    </location>
</feature>
<feature type="strand" evidence="3">
    <location>
        <begin position="59"/>
        <end position="66"/>
    </location>
</feature>
<dbReference type="EMBL" id="AE004091">
    <property type="protein sequence ID" value="AAG08329.1"/>
    <property type="molecule type" value="Genomic_DNA"/>
</dbReference>
<dbReference type="PIR" id="D83028">
    <property type="entry name" value="D83028"/>
</dbReference>
<dbReference type="RefSeq" id="NP_253631.1">
    <property type="nucleotide sequence ID" value="NC_002516.2"/>
</dbReference>
<dbReference type="RefSeq" id="WP_003095657.1">
    <property type="nucleotide sequence ID" value="NZ_QZGE01000002.1"/>
</dbReference>
<dbReference type="PDB" id="1U1S">
    <property type="method" value="X-ray"/>
    <property type="resolution" value="1.60 A"/>
    <property type="chains" value="A/B/C/D/E/F=1-82"/>
</dbReference>
<dbReference type="PDB" id="1U1T">
    <property type="method" value="X-ray"/>
    <property type="resolution" value="1.90 A"/>
    <property type="chains" value="A/B/C/D/E/F=1-82"/>
</dbReference>
<dbReference type="PDB" id="3INZ">
    <property type="method" value="X-ray"/>
    <property type="resolution" value="1.70 A"/>
    <property type="chains" value="A/B/C/D/E/F=1-82"/>
</dbReference>
<dbReference type="PDB" id="3M4G">
    <property type="method" value="X-ray"/>
    <property type="resolution" value="2.05 A"/>
    <property type="chains" value="A/B/C/D/E/F/G/H/I/J/K/L=1-82"/>
</dbReference>
<dbReference type="PDB" id="3QUI">
    <property type="method" value="X-ray"/>
    <property type="resolution" value="1.93 A"/>
    <property type="chains" value="A/B/C/D/E/F=1-82"/>
</dbReference>
<dbReference type="PDB" id="4J5Y">
    <property type="method" value="X-ray"/>
    <property type="resolution" value="2.10 A"/>
    <property type="chains" value="A/B/C/D/E/F=1-82"/>
</dbReference>
<dbReference type="PDB" id="4J6W">
    <property type="method" value="X-ray"/>
    <property type="resolution" value="1.80 A"/>
    <property type="chains" value="A/B/C/D/E/F=1-82"/>
</dbReference>
<dbReference type="PDB" id="4J6X">
    <property type="method" value="X-ray"/>
    <property type="resolution" value="2.22 A"/>
    <property type="chains" value="A/B/C/D/E/F=1-82"/>
</dbReference>
<dbReference type="PDB" id="4J6Y">
    <property type="method" value="X-ray"/>
    <property type="resolution" value="2.14 A"/>
    <property type="chains" value="A/B/C/D/E/F=1-82"/>
</dbReference>
<dbReference type="PDB" id="4MMK">
    <property type="method" value="X-ray"/>
    <property type="resolution" value="2.16 A"/>
    <property type="chains" value="A/B/C/D/E/F/G/H/I/J/K/L=1-82"/>
</dbReference>
<dbReference type="PDB" id="4MML">
    <property type="method" value="X-ray"/>
    <property type="resolution" value="1.80 A"/>
    <property type="chains" value="A=1-82"/>
</dbReference>
<dbReference type="PDB" id="6O1K">
    <property type="method" value="EM"/>
    <property type="resolution" value="3.13 A"/>
    <property type="chains" value="C/D/E/F/G/H/I/J/K/L/M/N=5-71"/>
</dbReference>
<dbReference type="PDB" id="6O1L">
    <property type="method" value="EM"/>
    <property type="resolution" value="3.37 A"/>
    <property type="chains" value="C/D/E/F/G/H/I/J/K/L/M/N=5-71"/>
</dbReference>
<dbReference type="PDB" id="6O1M">
    <property type="method" value="EM"/>
    <property type="resolution" value="3.15 A"/>
    <property type="chains" value="C/D/E/F/G/H/I/J/K/L/M/N=5-71"/>
</dbReference>
<dbReference type="PDB" id="6XYJ">
    <property type="method" value="X-ray"/>
    <property type="resolution" value="2.77 A"/>
    <property type="chains" value="AAA/BBB/CCC/DDD/EEE/FFF=1-82"/>
</dbReference>
<dbReference type="PDB" id="8BVH">
    <property type="method" value="EM"/>
    <property type="resolution" value="3.60 A"/>
    <property type="chains" value="C/D/E/F/J/K/L/M/N/O/P/Q/R/S/T/U/w/x=1-82"/>
</dbReference>
<dbReference type="PDBsum" id="1U1S"/>
<dbReference type="PDBsum" id="1U1T"/>
<dbReference type="PDBsum" id="3INZ"/>
<dbReference type="PDBsum" id="3M4G"/>
<dbReference type="PDBsum" id="3QUI"/>
<dbReference type="PDBsum" id="4J5Y"/>
<dbReference type="PDBsum" id="4J6W"/>
<dbReference type="PDBsum" id="4J6X"/>
<dbReference type="PDBsum" id="4J6Y"/>
<dbReference type="PDBsum" id="4MMK"/>
<dbReference type="PDBsum" id="4MML"/>
<dbReference type="PDBsum" id="6O1K"/>
<dbReference type="PDBsum" id="6O1L"/>
<dbReference type="PDBsum" id="6O1M"/>
<dbReference type="PDBsum" id="6XYJ"/>
<dbReference type="PDBsum" id="8BVH"/>
<dbReference type="EMDB" id="EMD-0590"/>
<dbReference type="EMDB" id="EMD-0591"/>
<dbReference type="EMDB" id="EMD-0592"/>
<dbReference type="SMR" id="Q9HUM0"/>
<dbReference type="FunCoup" id="Q9HUM0">
    <property type="interactions" value="363"/>
</dbReference>
<dbReference type="STRING" id="208964.PA4944"/>
<dbReference type="PaxDb" id="208964-PA4944"/>
<dbReference type="GeneID" id="77223493"/>
<dbReference type="GeneID" id="878015"/>
<dbReference type="KEGG" id="pae:PA4944"/>
<dbReference type="PATRIC" id="fig|208964.12.peg.5177"/>
<dbReference type="PseudoCAP" id="PA4944"/>
<dbReference type="HOGENOM" id="CLU_113688_2_2_6"/>
<dbReference type="InParanoid" id="Q9HUM0"/>
<dbReference type="OrthoDB" id="9799751at2"/>
<dbReference type="PhylomeDB" id="Q9HUM0"/>
<dbReference type="BioCyc" id="PAER208964:G1FZ6-5060-MONOMER"/>
<dbReference type="EvolutionaryTrace" id="Q9HUM0"/>
<dbReference type="Proteomes" id="UP000002438">
    <property type="component" value="Chromosome"/>
</dbReference>
<dbReference type="GO" id="GO:0005829">
    <property type="term" value="C:cytosol"/>
    <property type="evidence" value="ECO:0000318"/>
    <property type="project" value="GO_Central"/>
</dbReference>
<dbReference type="GO" id="GO:0003723">
    <property type="term" value="F:RNA binding"/>
    <property type="evidence" value="ECO:0000318"/>
    <property type="project" value="GO_Central"/>
</dbReference>
<dbReference type="GO" id="GO:0009372">
    <property type="term" value="P:quorum sensing"/>
    <property type="evidence" value="ECO:0000315"/>
    <property type="project" value="PseudoCAP"/>
</dbReference>
<dbReference type="GO" id="GO:0043609">
    <property type="term" value="P:regulation of carbon utilization"/>
    <property type="evidence" value="ECO:0000314"/>
    <property type="project" value="PseudoCAP"/>
</dbReference>
<dbReference type="GO" id="GO:0006355">
    <property type="term" value="P:regulation of DNA-templated transcription"/>
    <property type="evidence" value="ECO:0007669"/>
    <property type="project" value="InterPro"/>
</dbReference>
<dbReference type="GO" id="GO:0043487">
    <property type="term" value="P:regulation of RNA stability"/>
    <property type="evidence" value="ECO:0000315"/>
    <property type="project" value="PseudoCAP"/>
</dbReference>
<dbReference type="GO" id="GO:0006417">
    <property type="term" value="P:regulation of translation"/>
    <property type="evidence" value="ECO:0000314"/>
    <property type="project" value="PseudoCAP"/>
</dbReference>
<dbReference type="GO" id="GO:0045974">
    <property type="term" value="P:regulation of translation, ncRNA-mediated"/>
    <property type="evidence" value="ECO:0000314"/>
    <property type="project" value="PseudoCAP"/>
</dbReference>
<dbReference type="CDD" id="cd01716">
    <property type="entry name" value="Hfq"/>
    <property type="match status" value="1"/>
</dbReference>
<dbReference type="FunFam" id="2.30.30.100:FF:000001">
    <property type="entry name" value="RNA-binding protein Hfq"/>
    <property type="match status" value="1"/>
</dbReference>
<dbReference type="Gene3D" id="2.30.30.100">
    <property type="match status" value="1"/>
</dbReference>
<dbReference type="HAMAP" id="MF_00436">
    <property type="entry name" value="Hfq"/>
    <property type="match status" value="1"/>
</dbReference>
<dbReference type="InterPro" id="IPR005001">
    <property type="entry name" value="Hfq"/>
</dbReference>
<dbReference type="InterPro" id="IPR010920">
    <property type="entry name" value="LSM_dom_sf"/>
</dbReference>
<dbReference type="InterPro" id="IPR047575">
    <property type="entry name" value="Sm"/>
</dbReference>
<dbReference type="NCBIfam" id="TIGR02383">
    <property type="entry name" value="Hfq"/>
    <property type="match status" value="1"/>
</dbReference>
<dbReference type="NCBIfam" id="NF001602">
    <property type="entry name" value="PRK00395.1"/>
    <property type="match status" value="1"/>
</dbReference>
<dbReference type="PANTHER" id="PTHR34772">
    <property type="entry name" value="RNA-BINDING PROTEIN HFQ"/>
    <property type="match status" value="1"/>
</dbReference>
<dbReference type="PANTHER" id="PTHR34772:SF1">
    <property type="entry name" value="RNA-BINDING PROTEIN HFQ"/>
    <property type="match status" value="1"/>
</dbReference>
<dbReference type="Pfam" id="PF17209">
    <property type="entry name" value="Hfq"/>
    <property type="match status" value="1"/>
</dbReference>
<dbReference type="SUPFAM" id="SSF50182">
    <property type="entry name" value="Sm-like ribonucleoproteins"/>
    <property type="match status" value="1"/>
</dbReference>
<dbReference type="PROSITE" id="PS52002">
    <property type="entry name" value="SM"/>
    <property type="match status" value="1"/>
</dbReference>
<protein>
    <recommendedName>
        <fullName evidence="1">RNA-binding protein Hfq</fullName>
    </recommendedName>
</protein>
<sequence>MSKGHSLQDPYLNTLRKERVPVSIYLVNGIKLQGQIESFDQFVILLKNTVSQMVYKHAISTVVPSRPVRLPSGDQPAEPGNA</sequence>
<organism>
    <name type="scientific">Pseudomonas aeruginosa (strain ATCC 15692 / DSM 22644 / CIP 104116 / JCM 14847 / LMG 12228 / 1C / PRS 101 / PAO1)</name>
    <dbReference type="NCBI Taxonomy" id="208964"/>
    <lineage>
        <taxon>Bacteria</taxon>
        <taxon>Pseudomonadati</taxon>
        <taxon>Pseudomonadota</taxon>
        <taxon>Gammaproteobacteria</taxon>
        <taxon>Pseudomonadales</taxon>
        <taxon>Pseudomonadaceae</taxon>
        <taxon>Pseudomonas</taxon>
    </lineage>
</organism>
<comment type="function">
    <text evidence="1">RNA chaperone that binds small regulatory RNA (sRNAs) and mRNAs to facilitate mRNA translational regulation in response to envelope stress, environmental stress and changes in metabolite concentrations. Also binds with high specificity to tRNAs.</text>
</comment>
<comment type="subunit">
    <text evidence="1">Homohexamer.</text>
</comment>
<comment type="similarity">
    <text evidence="1">Belongs to the Hfq family.</text>
</comment>
<proteinExistence type="evidence at protein level"/>
<reference key="1">
    <citation type="journal article" date="2000" name="Nature">
        <title>Complete genome sequence of Pseudomonas aeruginosa PAO1, an opportunistic pathogen.</title>
        <authorList>
            <person name="Stover C.K."/>
            <person name="Pham X.-Q.T."/>
            <person name="Erwin A.L."/>
            <person name="Mizoguchi S.D."/>
            <person name="Warrener P."/>
            <person name="Hickey M.J."/>
            <person name="Brinkman F.S.L."/>
            <person name="Hufnagle W.O."/>
            <person name="Kowalik D.J."/>
            <person name="Lagrou M."/>
            <person name="Garber R.L."/>
            <person name="Goltry L."/>
            <person name="Tolentino E."/>
            <person name="Westbrock-Wadman S."/>
            <person name="Yuan Y."/>
            <person name="Brody L.L."/>
            <person name="Coulter S.N."/>
            <person name="Folger K.R."/>
            <person name="Kas A."/>
            <person name="Larbig K."/>
            <person name="Lim R.M."/>
            <person name="Smith K.A."/>
            <person name="Spencer D.H."/>
            <person name="Wong G.K.-S."/>
            <person name="Wu Z."/>
            <person name="Paulsen I.T."/>
            <person name="Reizer J."/>
            <person name="Saier M.H. Jr."/>
            <person name="Hancock R.E.W."/>
            <person name="Lory S."/>
            <person name="Olson M.V."/>
        </authorList>
    </citation>
    <scope>NUCLEOTIDE SEQUENCE [LARGE SCALE GENOMIC DNA]</scope>
    <source>
        <strain>ATCC 15692 / DSM 22644 / CIP 104116 / JCM 14847 / LMG 12228 / 1C / PRS 101 / PAO1</strain>
    </source>
</reference>
<accession>Q9HUM0</accession>
<name>HFQ_PSEAE</name>
<gene>
    <name evidence="1" type="primary">hfq</name>
    <name type="ordered locus">PA4944</name>
</gene>
<evidence type="ECO:0000255" key="1">
    <source>
        <dbReference type="HAMAP-Rule" id="MF_00436"/>
    </source>
</evidence>
<evidence type="ECO:0000255" key="2">
    <source>
        <dbReference type="PROSITE-ProRule" id="PRU01346"/>
    </source>
</evidence>
<evidence type="ECO:0007829" key="3">
    <source>
        <dbReference type="PDB" id="1U1S"/>
    </source>
</evidence>
<evidence type="ECO:0007829" key="4">
    <source>
        <dbReference type="PDB" id="3QUI"/>
    </source>
</evidence>
<keyword id="KW-0002">3D-structure</keyword>
<keyword id="KW-1185">Reference proteome</keyword>
<keyword id="KW-0694">RNA-binding</keyword>
<keyword id="KW-0346">Stress response</keyword>